<dbReference type="EMBL" id="AB008264">
    <property type="protein sequence ID" value="BAB09186.1"/>
    <property type="molecule type" value="Genomic_DNA"/>
</dbReference>
<dbReference type="EMBL" id="CP002688">
    <property type="protein sequence ID" value="AED94874.1"/>
    <property type="molecule type" value="Genomic_DNA"/>
</dbReference>
<dbReference type="EMBL" id="CP002688">
    <property type="protein sequence ID" value="AED94875.1"/>
    <property type="molecule type" value="Genomic_DNA"/>
</dbReference>
<dbReference type="EMBL" id="AK118124">
    <property type="protein sequence ID" value="BAC42750.1"/>
    <property type="molecule type" value="mRNA"/>
</dbReference>
<dbReference type="EMBL" id="BT005444">
    <property type="protein sequence ID" value="AAO63864.1"/>
    <property type="molecule type" value="mRNA"/>
</dbReference>
<dbReference type="EMBL" id="AY086278">
    <property type="protein sequence ID" value="AAM64350.1"/>
    <property type="molecule type" value="mRNA"/>
</dbReference>
<dbReference type="RefSeq" id="NP_568614.1">
    <property type="nucleotide sequence ID" value="NM_123650.3"/>
</dbReference>
<dbReference type="RefSeq" id="NP_974872.1">
    <property type="nucleotide sequence ID" value="NM_203143.2"/>
</dbReference>
<dbReference type="SMR" id="Q9FMN4"/>
<dbReference type="BioGRID" id="19546">
    <property type="interactions" value="1"/>
</dbReference>
<dbReference type="FunCoup" id="Q9FMN4">
    <property type="interactions" value="2547"/>
</dbReference>
<dbReference type="IntAct" id="Q9FMN4">
    <property type="interactions" value="1"/>
</dbReference>
<dbReference type="STRING" id="3702.Q9FMN4"/>
<dbReference type="iPTMnet" id="Q9FMN4"/>
<dbReference type="PaxDb" id="3702-AT5G42850.1"/>
<dbReference type="ProteomicsDB" id="234228"/>
<dbReference type="EnsemblPlants" id="AT5G42850.1">
    <property type="protein sequence ID" value="AT5G42850.1"/>
    <property type="gene ID" value="AT5G42850"/>
</dbReference>
<dbReference type="EnsemblPlants" id="AT5G42850.2">
    <property type="protein sequence ID" value="AT5G42850.2"/>
    <property type="gene ID" value="AT5G42850"/>
</dbReference>
<dbReference type="GeneID" id="834296"/>
<dbReference type="Gramene" id="AT5G42850.1">
    <property type="protein sequence ID" value="AT5G42850.1"/>
    <property type="gene ID" value="AT5G42850"/>
</dbReference>
<dbReference type="Gramene" id="AT5G42850.2">
    <property type="protein sequence ID" value="AT5G42850.2"/>
    <property type="gene ID" value="AT5G42850"/>
</dbReference>
<dbReference type="KEGG" id="ath:AT5G42850"/>
<dbReference type="Araport" id="AT5G42850"/>
<dbReference type="TAIR" id="AT5G42850"/>
<dbReference type="eggNOG" id="KOG3425">
    <property type="taxonomic scope" value="Eukaryota"/>
</dbReference>
<dbReference type="HOGENOM" id="CLU_120161_1_0_1"/>
<dbReference type="InParanoid" id="Q9FMN4"/>
<dbReference type="OMA" id="FRTDPTY"/>
<dbReference type="PhylomeDB" id="Q9FMN4"/>
<dbReference type="PRO" id="PR:Q9FMN4"/>
<dbReference type="Proteomes" id="UP000006548">
    <property type="component" value="Chromosome 5"/>
</dbReference>
<dbReference type="ExpressionAtlas" id="Q9FMN4">
    <property type="expression patterns" value="baseline and differential"/>
</dbReference>
<dbReference type="GO" id="GO:0005829">
    <property type="term" value="C:cytosol"/>
    <property type="evidence" value="ECO:0007005"/>
    <property type="project" value="TAIR"/>
</dbReference>
<dbReference type="GO" id="GO:0009536">
    <property type="term" value="C:plastid"/>
    <property type="evidence" value="ECO:0007005"/>
    <property type="project" value="TAIR"/>
</dbReference>
<dbReference type="GO" id="GO:0047134">
    <property type="term" value="F:protein-disulfide reductase [NAD(P)H] activity"/>
    <property type="evidence" value="ECO:0007669"/>
    <property type="project" value="InterPro"/>
</dbReference>
<dbReference type="CDD" id="cd02952">
    <property type="entry name" value="TRP14_like"/>
    <property type="match status" value="1"/>
</dbReference>
<dbReference type="FunFam" id="3.40.30.10:FF:000259">
    <property type="entry name" value="Thioredoxin-like protein Clot"/>
    <property type="match status" value="1"/>
</dbReference>
<dbReference type="Gene3D" id="3.40.30.10">
    <property type="entry name" value="Glutaredoxin"/>
    <property type="match status" value="1"/>
</dbReference>
<dbReference type="InterPro" id="IPR036249">
    <property type="entry name" value="Thioredoxin-like_sf"/>
</dbReference>
<dbReference type="InterPro" id="IPR045108">
    <property type="entry name" value="TXNDC17-like"/>
</dbReference>
<dbReference type="InterPro" id="IPR010357">
    <property type="entry name" value="TXNDC17_dom"/>
</dbReference>
<dbReference type="PANTHER" id="PTHR12452">
    <property type="entry name" value="42-9-9 PROTEIN-RELATED"/>
    <property type="match status" value="1"/>
</dbReference>
<dbReference type="PANTHER" id="PTHR12452:SF0">
    <property type="entry name" value="THIOREDOXIN DOMAIN-CONTAINING PROTEIN 17"/>
    <property type="match status" value="1"/>
</dbReference>
<dbReference type="Pfam" id="PF06110">
    <property type="entry name" value="TXD17-like_Trx"/>
    <property type="match status" value="1"/>
</dbReference>
<dbReference type="SUPFAM" id="SSF52833">
    <property type="entry name" value="Thioredoxin-like"/>
    <property type="match status" value="1"/>
</dbReference>
<evidence type="ECO:0000250" key="1"/>
<evidence type="ECO:0000255" key="2"/>
<evidence type="ECO:0000305" key="3"/>
<gene>
    <name type="ordered locus">At5g42850</name>
    <name type="ORF">MBD2.4</name>
</gene>
<protein>
    <recommendedName>
        <fullName>Thioredoxin-like protein Clot</fullName>
    </recommendedName>
    <alternativeName>
        <fullName>Thioredoxin Clot</fullName>
        <shortName>AtClot</shortName>
    </alternativeName>
</protein>
<feature type="chain" id="PRO_0000394546" description="Thioredoxin-like protein Clot">
    <location>
        <begin position="1"/>
        <end position="134"/>
    </location>
</feature>
<feature type="domain" description="Thioredoxin">
    <location>
        <begin position="1"/>
        <end position="134"/>
    </location>
</feature>
<feature type="active site" description="Nucleophile" evidence="2">
    <location>
        <position position="48"/>
    </location>
</feature>
<feature type="active site" description="Nucleophile" evidence="2">
    <location>
        <position position="51"/>
    </location>
</feature>
<feature type="disulfide bond" description="Redox-active" evidence="1">
    <location>
        <begin position="48"/>
        <end position="51"/>
    </location>
</feature>
<feature type="sequence conflict" description="In Ref. 5; AAM64350." evidence="3" ref="5">
    <original>V</original>
    <variation>L</variation>
    <location>
        <position position="6"/>
    </location>
</feature>
<feature type="sequence conflict" description="In Ref. 5; AAM64350." evidence="3" ref="5">
    <original>S</original>
    <variation>I</variation>
    <location>
        <position position="16"/>
    </location>
</feature>
<feature type="sequence conflict" description="In Ref. 5; AAM64350." evidence="3" ref="5">
    <original>S</original>
    <variation>N</variation>
    <location>
        <position position="26"/>
    </location>
</feature>
<feature type="sequence conflict" description="In Ref. 5; AAM64350." evidence="3" ref="5">
    <original>K</original>
    <variation>N</variation>
    <location>
        <position position="70"/>
    </location>
</feature>
<reference key="1">
    <citation type="journal article" date="1997" name="DNA Res.">
        <title>Structural analysis of Arabidopsis thaliana chromosome 5. III. Sequence features of the regions of 1,191,918 bp covered by seventeen physically assigned P1 clones.</title>
        <authorList>
            <person name="Nakamura Y."/>
            <person name="Sato S."/>
            <person name="Kaneko T."/>
            <person name="Kotani H."/>
            <person name="Asamizu E."/>
            <person name="Miyajima N."/>
            <person name="Tabata S."/>
        </authorList>
    </citation>
    <scope>NUCLEOTIDE SEQUENCE [LARGE SCALE GENOMIC DNA]</scope>
    <source>
        <strain>cv. Columbia</strain>
    </source>
</reference>
<reference key="2">
    <citation type="journal article" date="2017" name="Plant J.">
        <title>Araport11: a complete reannotation of the Arabidopsis thaliana reference genome.</title>
        <authorList>
            <person name="Cheng C.Y."/>
            <person name="Krishnakumar V."/>
            <person name="Chan A.P."/>
            <person name="Thibaud-Nissen F."/>
            <person name="Schobel S."/>
            <person name="Town C.D."/>
        </authorList>
    </citation>
    <scope>GENOME REANNOTATION</scope>
    <source>
        <strain>cv. Columbia</strain>
    </source>
</reference>
<reference key="3">
    <citation type="journal article" date="2002" name="Science">
        <title>Functional annotation of a full-length Arabidopsis cDNA collection.</title>
        <authorList>
            <person name="Seki M."/>
            <person name="Narusaka M."/>
            <person name="Kamiya A."/>
            <person name="Ishida J."/>
            <person name="Satou M."/>
            <person name="Sakurai T."/>
            <person name="Nakajima M."/>
            <person name="Enju A."/>
            <person name="Akiyama K."/>
            <person name="Oono Y."/>
            <person name="Muramatsu M."/>
            <person name="Hayashizaki Y."/>
            <person name="Kawai J."/>
            <person name="Carninci P."/>
            <person name="Itoh M."/>
            <person name="Ishii Y."/>
            <person name="Arakawa T."/>
            <person name="Shibata K."/>
            <person name="Shinagawa A."/>
            <person name="Shinozaki K."/>
        </authorList>
    </citation>
    <scope>NUCLEOTIDE SEQUENCE [LARGE SCALE MRNA]</scope>
    <source>
        <strain>cv. Columbia</strain>
    </source>
</reference>
<reference key="4">
    <citation type="journal article" date="2003" name="Science">
        <title>Empirical analysis of transcriptional activity in the Arabidopsis genome.</title>
        <authorList>
            <person name="Yamada K."/>
            <person name="Lim J."/>
            <person name="Dale J.M."/>
            <person name="Chen H."/>
            <person name="Shinn P."/>
            <person name="Palm C.J."/>
            <person name="Southwick A.M."/>
            <person name="Wu H.C."/>
            <person name="Kim C.J."/>
            <person name="Nguyen M."/>
            <person name="Pham P.K."/>
            <person name="Cheuk R.F."/>
            <person name="Karlin-Newmann G."/>
            <person name="Liu S.X."/>
            <person name="Lam B."/>
            <person name="Sakano H."/>
            <person name="Wu T."/>
            <person name="Yu G."/>
            <person name="Miranda M."/>
            <person name="Quach H.L."/>
            <person name="Tripp M."/>
            <person name="Chang C.H."/>
            <person name="Lee J.M."/>
            <person name="Toriumi M.J."/>
            <person name="Chan M.M."/>
            <person name="Tang C.C."/>
            <person name="Onodera C.S."/>
            <person name="Deng J.M."/>
            <person name="Akiyama K."/>
            <person name="Ansari Y."/>
            <person name="Arakawa T."/>
            <person name="Banh J."/>
            <person name="Banno F."/>
            <person name="Bowser L."/>
            <person name="Brooks S.Y."/>
            <person name="Carninci P."/>
            <person name="Chao Q."/>
            <person name="Choy N."/>
            <person name="Enju A."/>
            <person name="Goldsmith A.D."/>
            <person name="Gurjal M."/>
            <person name="Hansen N.F."/>
            <person name="Hayashizaki Y."/>
            <person name="Johnson-Hopson C."/>
            <person name="Hsuan V.W."/>
            <person name="Iida K."/>
            <person name="Karnes M."/>
            <person name="Khan S."/>
            <person name="Koesema E."/>
            <person name="Ishida J."/>
            <person name="Jiang P.X."/>
            <person name="Jones T."/>
            <person name="Kawai J."/>
            <person name="Kamiya A."/>
            <person name="Meyers C."/>
            <person name="Nakajima M."/>
            <person name="Narusaka M."/>
            <person name="Seki M."/>
            <person name="Sakurai T."/>
            <person name="Satou M."/>
            <person name="Tamse R."/>
            <person name="Vaysberg M."/>
            <person name="Wallender E.K."/>
            <person name="Wong C."/>
            <person name="Yamamura Y."/>
            <person name="Yuan S."/>
            <person name="Shinozaki K."/>
            <person name="Davis R.W."/>
            <person name="Theologis A."/>
            <person name="Ecker J.R."/>
        </authorList>
    </citation>
    <scope>NUCLEOTIDE SEQUENCE [LARGE SCALE MRNA]</scope>
    <source>
        <strain>cv. Columbia</strain>
    </source>
</reference>
<reference key="5">
    <citation type="submission" date="2002-03" db="EMBL/GenBank/DDBJ databases">
        <title>Full-length cDNA from Arabidopsis thaliana.</title>
        <authorList>
            <person name="Brover V.V."/>
            <person name="Troukhan M.E."/>
            <person name="Alexandrov N.A."/>
            <person name="Lu Y.-P."/>
            <person name="Flavell R.B."/>
            <person name="Feldmann K.A."/>
        </authorList>
    </citation>
    <scope>NUCLEOTIDE SEQUENCE [LARGE SCALE MRNA]</scope>
</reference>
<reference key="6">
    <citation type="journal article" date="2009" name="Mol. Plant">
        <title>Comparative genomic study of the thioredoxin family in photosynthetic organisms with emphasis on Populus trichocarpa.</title>
        <authorList>
            <person name="Chibani K."/>
            <person name="Wingsle G."/>
            <person name="Jacquot J.P."/>
            <person name="Gelhaye E."/>
            <person name="Rouhier N."/>
        </authorList>
    </citation>
    <scope>GENE FAMILY</scope>
    <scope>NOMENCLATURE</scope>
</reference>
<name>TCLOT_ARATH</name>
<proteinExistence type="evidence at transcript level"/>
<accession>Q9FMN4</accession>
<accession>Q8LD10</accession>
<comment type="function">
    <text>Probable thiol-disulfide oxidoreductase that may participate in various redox reactions.</text>
</comment>
<comment type="similarity">
    <text evidence="3">Belongs to the thioredoxin family.</text>
</comment>
<comment type="caution">
    <text evidence="3">The active site contains a CPDC motif which differs from the conserved CGPC motif.</text>
</comment>
<keyword id="KW-1015">Disulfide bond</keyword>
<keyword id="KW-0249">Electron transport</keyword>
<keyword id="KW-0676">Redox-active center</keyword>
<keyword id="KW-1185">Reference proteome</keyword>
<keyword id="KW-0813">Transport</keyword>
<sequence length="134" mass="15206">MTLKKVDANPSTLESSLQELKSDETSRSKINFILFLADNDPTTGQSWCPDCVRAEPVIYKTLEEFPEEVKLIRAYAGDRPTWRTPAHPWRVDSRFKLTGVPTLVRWDGDSVKGRLEDHQAHLPHLILPLLAPST</sequence>
<organism>
    <name type="scientific">Arabidopsis thaliana</name>
    <name type="common">Mouse-ear cress</name>
    <dbReference type="NCBI Taxonomy" id="3702"/>
    <lineage>
        <taxon>Eukaryota</taxon>
        <taxon>Viridiplantae</taxon>
        <taxon>Streptophyta</taxon>
        <taxon>Embryophyta</taxon>
        <taxon>Tracheophyta</taxon>
        <taxon>Spermatophyta</taxon>
        <taxon>Magnoliopsida</taxon>
        <taxon>eudicotyledons</taxon>
        <taxon>Gunneridae</taxon>
        <taxon>Pentapetalae</taxon>
        <taxon>rosids</taxon>
        <taxon>malvids</taxon>
        <taxon>Brassicales</taxon>
        <taxon>Brassicaceae</taxon>
        <taxon>Camelineae</taxon>
        <taxon>Arabidopsis</taxon>
    </lineage>
</organism>